<feature type="chain" id="PRO_0000437741" description="FAD-dependent monooxygenase ctvC">
    <location>
        <begin position="1"/>
        <end position="473"/>
    </location>
</feature>
<feature type="transmembrane region" description="Helical" evidence="2">
    <location>
        <begin position="218"/>
        <end position="238"/>
    </location>
</feature>
<feature type="transmembrane region" description="Helical" evidence="2">
    <location>
        <begin position="451"/>
        <end position="471"/>
    </location>
</feature>
<feature type="binding site" evidence="1">
    <location>
        <position position="37"/>
    </location>
    <ligand>
        <name>FAD</name>
        <dbReference type="ChEBI" id="CHEBI:57692"/>
    </ligand>
</feature>
<feature type="binding site" evidence="1">
    <location>
        <position position="51"/>
    </location>
    <ligand>
        <name>FAD</name>
        <dbReference type="ChEBI" id="CHEBI:57692"/>
    </ligand>
</feature>
<feature type="binding site" evidence="1">
    <location>
        <position position="110"/>
    </location>
    <ligand>
        <name>FAD</name>
        <dbReference type="ChEBI" id="CHEBI:57692"/>
    </ligand>
</feature>
<feature type="binding site" evidence="1">
    <location>
        <position position="310"/>
    </location>
    <ligand>
        <name>FAD</name>
        <dbReference type="ChEBI" id="CHEBI:57692"/>
    </ligand>
</feature>
<feature type="binding site" evidence="1">
    <location>
        <position position="323"/>
    </location>
    <ligand>
        <name>FAD</name>
        <dbReference type="ChEBI" id="CHEBI:57692"/>
    </ligand>
</feature>
<feature type="glycosylation site" description="N-linked (GlcNAc...) asparagine" evidence="3">
    <location>
        <position position="358"/>
    </location>
</feature>
<dbReference type="EC" id="1.-.-.-" evidence="7"/>
<dbReference type="EMBL" id="CH476608">
    <property type="protein sequence ID" value="EAU29811.1"/>
    <property type="molecule type" value="Genomic_DNA"/>
</dbReference>
<dbReference type="RefSeq" id="XP_001218242.1">
    <property type="nucleotide sequence ID" value="XM_001218241.1"/>
</dbReference>
<dbReference type="SMR" id="Q0C9L4"/>
<dbReference type="STRING" id="341663.Q0C9L4"/>
<dbReference type="GlyCosmos" id="Q0C9L4">
    <property type="glycosylation" value="1 site, No reported glycans"/>
</dbReference>
<dbReference type="EnsemblFungi" id="EAU29811">
    <property type="protein sequence ID" value="EAU29811"/>
    <property type="gene ID" value="ATEG_09620"/>
</dbReference>
<dbReference type="GeneID" id="4354538"/>
<dbReference type="VEuPathDB" id="FungiDB:ATEG_09620"/>
<dbReference type="eggNOG" id="KOG2614">
    <property type="taxonomic scope" value="Eukaryota"/>
</dbReference>
<dbReference type="HOGENOM" id="CLU_009665_12_2_1"/>
<dbReference type="OMA" id="WAPWISK"/>
<dbReference type="OrthoDB" id="10029326at2759"/>
<dbReference type="Proteomes" id="UP000007963">
    <property type="component" value="Unassembled WGS sequence"/>
</dbReference>
<dbReference type="GO" id="GO:0016020">
    <property type="term" value="C:membrane"/>
    <property type="evidence" value="ECO:0007669"/>
    <property type="project" value="UniProtKB-SubCell"/>
</dbReference>
<dbReference type="GO" id="GO:0071949">
    <property type="term" value="F:FAD binding"/>
    <property type="evidence" value="ECO:0007669"/>
    <property type="project" value="InterPro"/>
</dbReference>
<dbReference type="GO" id="GO:0004497">
    <property type="term" value="F:monooxygenase activity"/>
    <property type="evidence" value="ECO:0007669"/>
    <property type="project" value="InterPro"/>
</dbReference>
<dbReference type="Gene3D" id="3.50.50.60">
    <property type="entry name" value="FAD/NAD(P)-binding domain"/>
    <property type="match status" value="1"/>
</dbReference>
<dbReference type="InterPro" id="IPR002938">
    <property type="entry name" value="FAD-bd"/>
</dbReference>
<dbReference type="InterPro" id="IPR036188">
    <property type="entry name" value="FAD/NAD-bd_sf"/>
</dbReference>
<dbReference type="InterPro" id="IPR050562">
    <property type="entry name" value="FAD_mOase_fung"/>
</dbReference>
<dbReference type="PANTHER" id="PTHR47356:SF2">
    <property type="entry name" value="FAD-BINDING DOMAIN-CONTAINING PROTEIN-RELATED"/>
    <property type="match status" value="1"/>
</dbReference>
<dbReference type="PANTHER" id="PTHR47356">
    <property type="entry name" value="FAD-DEPENDENT MONOOXYGENASE ASQG-RELATED"/>
    <property type="match status" value="1"/>
</dbReference>
<dbReference type="Pfam" id="PF01494">
    <property type="entry name" value="FAD_binding_3"/>
    <property type="match status" value="1"/>
</dbReference>
<dbReference type="PRINTS" id="PR00420">
    <property type="entry name" value="RNGMNOXGNASE"/>
</dbReference>
<dbReference type="SUPFAM" id="SSF51905">
    <property type="entry name" value="FAD/NAD(P)-binding domain"/>
    <property type="match status" value="1"/>
</dbReference>
<protein>
    <recommendedName>
        <fullName evidence="8">FAD-dependent monooxygenase ctvC</fullName>
        <ecNumber evidence="7">1.-.-.-</ecNumber>
    </recommendedName>
    <alternativeName>
        <fullName evidence="9">Citreoviridin biosynthesis protein C</fullName>
    </alternativeName>
</protein>
<proteinExistence type="evidence at protein level"/>
<gene>
    <name evidence="8" type="primary">ctvC</name>
    <name type="ORF">ATEG_09620</name>
</gene>
<accession>Q0C9L4</accession>
<organism>
    <name type="scientific">Aspergillus terreus (strain NIH 2624 / FGSC A1156)</name>
    <dbReference type="NCBI Taxonomy" id="341663"/>
    <lineage>
        <taxon>Eukaryota</taxon>
        <taxon>Fungi</taxon>
        <taxon>Dikarya</taxon>
        <taxon>Ascomycota</taxon>
        <taxon>Pezizomycotina</taxon>
        <taxon>Eurotiomycetes</taxon>
        <taxon>Eurotiomycetidae</taxon>
        <taxon>Eurotiales</taxon>
        <taxon>Aspergillaceae</taxon>
        <taxon>Aspergillus</taxon>
        <taxon>Aspergillus subgen. Circumdati</taxon>
    </lineage>
</organism>
<comment type="function">
    <text evidence="7">FAD-dependent monooxygenase; part of the gene cluster that mediates the biosynthesis of citreoviridin, an inhibitor of the of F1-ATPase beta-subunit (PubMed:26954888). The HR-PKS ctvA accepts acetyl-CoA as the starter unit and catalyzes eight iterations of malonyl-CoA extension and four iterations of SAM-dependent methylation at C4, C12, C14, and C16 (PubMed:26954888). The KR and DH domains selectively act on the first six iterations to generate the hexaene chain (PubMed:26954888). In the last three iterations, the KR and DH domains terminate their functions to yield a beta,delta-diketo ester moiety, which then undergoes intramolecular cyclization to yield an alpha-pyrone intermediate (PubMed:26954888). Subsequently, ctvB methylates the alpha-pyrone hydroxyl group to generate citreomontanin (PubMed:26954888). In order to form the tetrahydrofuran ring with the correct stereochemistry, the terminal alkenes of citreomontanin need to undergo isomerization to yield a (17Z)-hexaene, a step that could be catalyzed by ctvC (PubMed:26954888). The (17Z)-hexaene then undergoes bisepoxidation by ctvC to form a (17R,16R,15S,14R)-bisepoxide moiety (PubMed:26954888). Lastly, ctvD acts as a regioselective hydrolase to form the tetrahydrofuran ring with the substituents in the correct absolute configuration, completing the biosynthesis of citreoviridin (PubMed:26954888).</text>
</comment>
<comment type="cofactor">
    <cofactor evidence="9">
        <name>FAD</name>
        <dbReference type="ChEBI" id="CHEBI:57692"/>
    </cofactor>
</comment>
<comment type="pathway">
    <text evidence="10">Mycotoxin biosynthesis.</text>
</comment>
<comment type="subcellular location">
    <subcellularLocation>
        <location evidence="2">Membrane</location>
        <topology evidence="2">Multi-pass membrane protein</topology>
    </subcellularLocation>
</comment>
<comment type="biotechnology">
    <text evidence="4 5 6">Citreoviridin inhibits mitochondrial oxidative phosphorylation by binding to the beta-subunit of F1-ATPase (PubMed:2523213). Ectopic mitochondrial ATP synthase is a factor that mediates HIV-1 transfer between antigen-presenting cells (APCs) and CD4+ target cells, and citreoviridin can completely block antigen-presenting cell (APC)-mediated transfer of HIV-1 at the APC-target cells (PubMed:22753871). Inhibition of ectopic mitochondrial ATP synthase by citreoviridin can also lead to suppression of cancer growth by activating the unfolded protein response (PubMed:22822083).</text>
</comment>
<comment type="similarity">
    <text evidence="9">Belongs to the paxM FAD-dependent monooxygenase family.</text>
</comment>
<reference key="1">
    <citation type="submission" date="2005-09" db="EMBL/GenBank/DDBJ databases">
        <title>Annotation of the Aspergillus terreus NIH2624 genome.</title>
        <authorList>
            <person name="Birren B.W."/>
            <person name="Lander E.S."/>
            <person name="Galagan J.E."/>
            <person name="Nusbaum C."/>
            <person name="Devon K."/>
            <person name="Henn M."/>
            <person name="Ma L.-J."/>
            <person name="Jaffe D.B."/>
            <person name="Butler J."/>
            <person name="Alvarez P."/>
            <person name="Gnerre S."/>
            <person name="Grabherr M."/>
            <person name="Kleber M."/>
            <person name="Mauceli E.W."/>
            <person name="Brockman W."/>
            <person name="Rounsley S."/>
            <person name="Young S.K."/>
            <person name="LaButti K."/>
            <person name="Pushparaj V."/>
            <person name="DeCaprio D."/>
            <person name="Crawford M."/>
            <person name="Koehrsen M."/>
            <person name="Engels R."/>
            <person name="Montgomery P."/>
            <person name="Pearson M."/>
            <person name="Howarth C."/>
            <person name="Larson L."/>
            <person name="Luoma S."/>
            <person name="White J."/>
            <person name="Alvarado L."/>
            <person name="Kodira C.D."/>
            <person name="Zeng Q."/>
            <person name="Oleary S."/>
            <person name="Yandava C."/>
            <person name="Denning D.W."/>
            <person name="Nierman W.C."/>
            <person name="Milne T."/>
            <person name="Madden K."/>
        </authorList>
    </citation>
    <scope>NUCLEOTIDE SEQUENCE [LARGE SCALE GENOMIC DNA]</scope>
    <source>
        <strain>NIH 2624 / FGSC A1156</strain>
    </source>
</reference>
<reference key="2">
    <citation type="journal article" date="1989" name="Arch. Biochem. Biophys.">
        <title>Effect of citreoviridin and isocitreoviridin on beef heart mitochondrial ATPase.</title>
        <authorList>
            <person name="Sayood S.F."/>
            <person name="Suh H."/>
            <person name="Wilcox C.S."/>
            <person name="Schuster S.M."/>
        </authorList>
    </citation>
    <scope>BIOTECHNOLOGY</scope>
</reference>
<reference key="3">
    <citation type="journal article" date="2012" name="Blood">
        <title>Ectopic ATP synthase facilitates transfer of HIV-1 from antigen-presenting cells to CD4(+) target cells.</title>
        <authorList>
            <person name="Yavlovich A."/>
            <person name="Viard M."/>
            <person name="Zhou M."/>
            <person name="Veenstra T.D."/>
            <person name="Wang J.M."/>
            <person name="Gong W."/>
            <person name="Heldman E."/>
            <person name="Blumenthal R."/>
            <person name="Raviv Y."/>
        </authorList>
    </citation>
    <scope>BIOTECHNOLOGY</scope>
</reference>
<reference key="4">
    <citation type="journal article" date="2012" name="Cancer Res.">
        <title>Ectopic ATP synthase blockade suppresses lung adenocarcinoma growth by activating the unfolded protein response.</title>
        <authorList>
            <person name="Chang H.Y."/>
            <person name="Huang H.C."/>
            <person name="Huang T.C."/>
            <person name="Yang P.C."/>
            <person name="Wang Y.C."/>
            <person name="Juan H.F."/>
        </authorList>
    </citation>
    <scope>BIOTECHNOLOGY</scope>
</reference>
<reference key="5">
    <citation type="journal article" date="2016" name="Org. Lett.">
        <title>Biosynthetic pathway of the reduced polyketide product citreoviridin in Aspergillus terreus var. aureus revealed by heterologous expression in Aspergillus nidulans.</title>
        <authorList>
            <person name="Lin T.S."/>
            <person name="Chiang Y.M."/>
            <person name="Wang C.C."/>
        </authorList>
    </citation>
    <scope>FUNCTION</scope>
    <scope>PATHWAY</scope>
</reference>
<keyword id="KW-0274">FAD</keyword>
<keyword id="KW-0285">Flavoprotein</keyword>
<keyword id="KW-0325">Glycoprotein</keyword>
<keyword id="KW-0472">Membrane</keyword>
<keyword id="KW-0560">Oxidoreductase</keyword>
<keyword id="KW-1185">Reference proteome</keyword>
<keyword id="KW-0812">Transmembrane</keyword>
<keyword id="KW-1133">Transmembrane helix</keyword>
<sequence>MEGKGPSFKVIIVGASVTGLTLAHCLHRAGIDYVVLEKHHEVHPPIGAAVAILPNGGRIMEQLGIFRHIEDRCQPFQRVHLCFQDGFYYDSLSPSVVLKRFGLKFAALERTQLLEILYTHLPDKSRVLTSKGVVRITPHGNKMSVTTADGDEFQGDLVVGADGVHSVTRREMWRIANIEQPGLIPFKEQASMSVEFSCIFGMSNPIPGRKHWQHIIRIGPGFTFLIFPAAGDSLFWVLIEKLPHKYIYPDVPRFSQEDAVTRCEAAASQPVWQEVRFRDIWAQRRGFRMVALEENLFRTWHHGRIICIGDSISKMTPNIGQGANTAIEAAAGLANVIYAITQNHHQPSDDTIHRALANFSERHRKRLDAIHLESRWITRLEACQGWVVTAFTRYVAPHCGDLFALGVVRNSYNGEVLQFLPLTERSGKHWPKLEWWNTWGLSKWQEFGERLVYCFGVVILLWISWAVFNVNQL</sequence>
<name>CTVC_ASPTN</name>
<evidence type="ECO:0000250" key="1">
    <source>
        <dbReference type="UniProtKB" id="B8M9J8"/>
    </source>
</evidence>
<evidence type="ECO:0000255" key="2"/>
<evidence type="ECO:0000255" key="3">
    <source>
        <dbReference type="PROSITE-ProRule" id="PRU00498"/>
    </source>
</evidence>
<evidence type="ECO:0000269" key="4">
    <source>
    </source>
</evidence>
<evidence type="ECO:0000269" key="5">
    <source>
    </source>
</evidence>
<evidence type="ECO:0000269" key="6">
    <source>
    </source>
</evidence>
<evidence type="ECO:0000269" key="7">
    <source>
    </source>
</evidence>
<evidence type="ECO:0000303" key="8">
    <source>
    </source>
</evidence>
<evidence type="ECO:0000305" key="9"/>
<evidence type="ECO:0000305" key="10">
    <source>
    </source>
</evidence>